<keyword id="KW-0464">Manganese</keyword>
<keyword id="KW-0479">Metal-binding</keyword>
<keyword id="KW-0560">Oxidoreductase</keyword>
<reference key="1">
    <citation type="submission" date="1996-01" db="EMBL/GenBank/DDBJ databases">
        <authorList>
            <person name="Tatum F.M."/>
            <person name="Briggs R.E."/>
            <person name="Steckelberg M.A."/>
        </authorList>
    </citation>
    <scope>NUCLEOTIDE SEQUENCE [GENOMIC DNA]</scope>
    <source>
        <strain>Serotype A1</strain>
    </source>
</reference>
<proteinExistence type="inferred from homology"/>
<sequence length="213" mass="23812">MAYTLPELGYAYDALEPHFDAKTMEIHHSKHHQAYINNANAALEAHPELLEKCPGALIKDLSQVPAEKRIAVRNNVGGHVNHTLFWKGLKTGTTLQGALKEAIERDFGSVEAFQSEFEKAATTRVGSGWAWLVLEEGKLAVVSTANQDNPLMGKEVAGVSGYPILVLDVWEHAYYLNYQNRRPDFIKAFWNVVNWDEAARRFEEKVATCGCAK</sequence>
<comment type="function">
    <text>Destroys superoxide anion radicals which are normally produced within the cells and which are toxic to biological systems.</text>
</comment>
<comment type="catalytic activity">
    <reaction>
        <text>2 superoxide + 2 H(+) = H2O2 + O2</text>
        <dbReference type="Rhea" id="RHEA:20696"/>
        <dbReference type="ChEBI" id="CHEBI:15378"/>
        <dbReference type="ChEBI" id="CHEBI:15379"/>
        <dbReference type="ChEBI" id="CHEBI:16240"/>
        <dbReference type="ChEBI" id="CHEBI:18421"/>
        <dbReference type="EC" id="1.15.1.1"/>
    </reaction>
</comment>
<comment type="cofactor">
    <cofactor evidence="1">
        <name>Mn(2+)</name>
        <dbReference type="ChEBI" id="CHEBI:29035"/>
    </cofactor>
    <text evidence="1">Binds 1 Mn(2+) ion per subunit.</text>
</comment>
<comment type="subunit">
    <text evidence="1">Homodimer.</text>
</comment>
<comment type="similarity">
    <text evidence="2">Belongs to the iron/manganese superoxide dismutase family.</text>
</comment>
<organism>
    <name type="scientific">Mannheimia haemolytica</name>
    <name type="common">Pasteurella haemolytica</name>
    <dbReference type="NCBI Taxonomy" id="75985"/>
    <lineage>
        <taxon>Bacteria</taxon>
        <taxon>Pseudomonadati</taxon>
        <taxon>Pseudomonadota</taxon>
        <taxon>Gammaproteobacteria</taxon>
        <taxon>Pasteurellales</taxon>
        <taxon>Pasteurellaceae</taxon>
        <taxon>Mannheimia</taxon>
    </lineage>
</organism>
<dbReference type="EC" id="1.15.1.1"/>
<dbReference type="EMBL" id="L47537">
    <property type="protein sequence ID" value="AAA85362.1"/>
    <property type="molecule type" value="Genomic_DNA"/>
</dbReference>
<dbReference type="RefSeq" id="WP_006247907.1">
    <property type="nucleotide sequence ID" value="NZ_VAJK01000001.1"/>
</dbReference>
<dbReference type="SMR" id="Q59679"/>
<dbReference type="STRING" id="75985.WC39_03895"/>
<dbReference type="GeneID" id="67368395"/>
<dbReference type="OrthoDB" id="9803125at2"/>
<dbReference type="GO" id="GO:0005737">
    <property type="term" value="C:cytoplasm"/>
    <property type="evidence" value="ECO:0007669"/>
    <property type="project" value="TreeGrafter"/>
</dbReference>
<dbReference type="GO" id="GO:0046872">
    <property type="term" value="F:metal ion binding"/>
    <property type="evidence" value="ECO:0007669"/>
    <property type="project" value="UniProtKB-KW"/>
</dbReference>
<dbReference type="GO" id="GO:0004784">
    <property type="term" value="F:superoxide dismutase activity"/>
    <property type="evidence" value="ECO:0007669"/>
    <property type="project" value="UniProtKB-EC"/>
</dbReference>
<dbReference type="FunFam" id="1.10.287.990:FF:000001">
    <property type="entry name" value="Superoxide dismutase"/>
    <property type="match status" value="1"/>
</dbReference>
<dbReference type="FunFam" id="3.55.40.20:FF:000001">
    <property type="entry name" value="Superoxide dismutase"/>
    <property type="match status" value="1"/>
</dbReference>
<dbReference type="Gene3D" id="1.10.287.990">
    <property type="entry name" value="Fe,Mn superoxide dismutase (SOD) domain"/>
    <property type="match status" value="1"/>
</dbReference>
<dbReference type="Gene3D" id="3.55.40.20">
    <property type="entry name" value="Iron/manganese superoxide dismutase, C-terminal domain"/>
    <property type="match status" value="1"/>
</dbReference>
<dbReference type="InterPro" id="IPR001189">
    <property type="entry name" value="Mn/Fe_SOD"/>
</dbReference>
<dbReference type="InterPro" id="IPR019833">
    <property type="entry name" value="Mn/Fe_SOD_BS"/>
</dbReference>
<dbReference type="InterPro" id="IPR019832">
    <property type="entry name" value="Mn/Fe_SOD_C"/>
</dbReference>
<dbReference type="InterPro" id="IPR019831">
    <property type="entry name" value="Mn/Fe_SOD_N"/>
</dbReference>
<dbReference type="InterPro" id="IPR036324">
    <property type="entry name" value="Mn/Fe_SOD_N_sf"/>
</dbReference>
<dbReference type="InterPro" id="IPR036314">
    <property type="entry name" value="SOD_C_sf"/>
</dbReference>
<dbReference type="NCBIfam" id="NF008177">
    <property type="entry name" value="PRK10925.1"/>
    <property type="match status" value="1"/>
</dbReference>
<dbReference type="PANTHER" id="PTHR43595">
    <property type="entry name" value="37S RIBOSOMAL PROTEIN S26, MITOCHONDRIAL"/>
    <property type="match status" value="1"/>
</dbReference>
<dbReference type="PANTHER" id="PTHR43595:SF2">
    <property type="entry name" value="SMALL RIBOSOMAL SUBUNIT PROTEIN MS42"/>
    <property type="match status" value="1"/>
</dbReference>
<dbReference type="Pfam" id="PF02777">
    <property type="entry name" value="Sod_Fe_C"/>
    <property type="match status" value="1"/>
</dbReference>
<dbReference type="Pfam" id="PF00081">
    <property type="entry name" value="Sod_Fe_N"/>
    <property type="match status" value="1"/>
</dbReference>
<dbReference type="PIRSF" id="PIRSF000349">
    <property type="entry name" value="SODismutase"/>
    <property type="match status" value="1"/>
</dbReference>
<dbReference type="PRINTS" id="PR01703">
    <property type="entry name" value="MNSODISMTASE"/>
</dbReference>
<dbReference type="SUPFAM" id="SSF54719">
    <property type="entry name" value="Fe,Mn superoxide dismutase (SOD), C-terminal domain"/>
    <property type="match status" value="1"/>
</dbReference>
<dbReference type="SUPFAM" id="SSF46609">
    <property type="entry name" value="Fe,Mn superoxide dismutase (SOD), N-terminal domain"/>
    <property type="match status" value="1"/>
</dbReference>
<dbReference type="PROSITE" id="PS00088">
    <property type="entry name" value="SOD_MN"/>
    <property type="match status" value="1"/>
</dbReference>
<accession>Q59679</accession>
<protein>
    <recommendedName>
        <fullName>Superoxide dismutase [Mn]</fullName>
        <ecNumber>1.15.1.1</ecNumber>
    </recommendedName>
</protein>
<feature type="chain" id="PRO_0000160062" description="Superoxide dismutase [Mn]">
    <location>
        <begin position="1"/>
        <end position="213"/>
    </location>
</feature>
<feature type="binding site" evidence="1">
    <location>
        <position position="27"/>
    </location>
    <ligand>
        <name>Mn(2+)</name>
        <dbReference type="ChEBI" id="CHEBI:29035"/>
    </ligand>
</feature>
<feature type="binding site" evidence="1">
    <location>
        <position position="82"/>
    </location>
    <ligand>
        <name>Mn(2+)</name>
        <dbReference type="ChEBI" id="CHEBI:29035"/>
    </ligand>
</feature>
<feature type="binding site" evidence="1">
    <location>
        <position position="168"/>
    </location>
    <ligand>
        <name>Mn(2+)</name>
        <dbReference type="ChEBI" id="CHEBI:29035"/>
    </ligand>
</feature>
<feature type="binding site" evidence="1">
    <location>
        <position position="172"/>
    </location>
    <ligand>
        <name>Mn(2+)</name>
        <dbReference type="ChEBI" id="CHEBI:29035"/>
    </ligand>
</feature>
<gene>
    <name type="primary">sodA</name>
    <name type="synonym">sod</name>
</gene>
<name>SODM_MANHA</name>
<evidence type="ECO:0000250" key="1"/>
<evidence type="ECO:0000305" key="2"/>